<gene>
    <name type="ordered locus">Os08g0325134</name>
    <name type="ordered locus">LOC_Os08g23570</name>
    <name type="ORF">OsJ_26886</name>
    <name type="ORF">OSJNBa0078D03.39</name>
    <name type="ORF">P0703C03.19</name>
</gene>
<reference key="1">
    <citation type="journal article" date="2005" name="Nature">
        <title>The map-based sequence of the rice genome.</title>
        <authorList>
            <consortium name="International rice genome sequencing project (IRGSP)"/>
        </authorList>
    </citation>
    <scope>NUCLEOTIDE SEQUENCE [LARGE SCALE GENOMIC DNA]</scope>
    <source>
        <strain>cv. Nipponbare</strain>
    </source>
</reference>
<reference key="2">
    <citation type="journal article" date="2013" name="Rice">
        <title>Improvement of the Oryza sativa Nipponbare reference genome using next generation sequence and optical map data.</title>
        <authorList>
            <person name="Kawahara Y."/>
            <person name="de la Bastide M."/>
            <person name="Hamilton J.P."/>
            <person name="Kanamori H."/>
            <person name="McCombie W.R."/>
            <person name="Ouyang S."/>
            <person name="Schwartz D.C."/>
            <person name="Tanaka T."/>
            <person name="Wu J."/>
            <person name="Zhou S."/>
            <person name="Childs K.L."/>
            <person name="Davidson R.M."/>
            <person name="Lin H."/>
            <person name="Quesada-Ocampo L."/>
            <person name="Vaillancourt B."/>
            <person name="Sakai H."/>
            <person name="Lee S.S."/>
            <person name="Kim J."/>
            <person name="Numa H."/>
            <person name="Itoh T."/>
            <person name="Buell C.R."/>
            <person name="Matsumoto T."/>
        </authorList>
    </citation>
    <scope>GENOME REANNOTATION</scope>
    <source>
        <strain>cv. Nipponbare</strain>
    </source>
</reference>
<reference key="3">
    <citation type="journal article" date="2005" name="PLoS Biol.">
        <title>The genomes of Oryza sativa: a history of duplications.</title>
        <authorList>
            <person name="Yu J."/>
            <person name="Wang J."/>
            <person name="Lin W."/>
            <person name="Li S."/>
            <person name="Li H."/>
            <person name="Zhou J."/>
            <person name="Ni P."/>
            <person name="Dong W."/>
            <person name="Hu S."/>
            <person name="Zeng C."/>
            <person name="Zhang J."/>
            <person name="Zhang Y."/>
            <person name="Li R."/>
            <person name="Xu Z."/>
            <person name="Li S."/>
            <person name="Li X."/>
            <person name="Zheng H."/>
            <person name="Cong L."/>
            <person name="Lin L."/>
            <person name="Yin J."/>
            <person name="Geng J."/>
            <person name="Li G."/>
            <person name="Shi J."/>
            <person name="Liu J."/>
            <person name="Lv H."/>
            <person name="Li J."/>
            <person name="Wang J."/>
            <person name="Deng Y."/>
            <person name="Ran L."/>
            <person name="Shi X."/>
            <person name="Wang X."/>
            <person name="Wu Q."/>
            <person name="Li C."/>
            <person name="Ren X."/>
            <person name="Wang J."/>
            <person name="Wang X."/>
            <person name="Li D."/>
            <person name="Liu D."/>
            <person name="Zhang X."/>
            <person name="Ji Z."/>
            <person name="Zhao W."/>
            <person name="Sun Y."/>
            <person name="Zhang Z."/>
            <person name="Bao J."/>
            <person name="Han Y."/>
            <person name="Dong L."/>
            <person name="Ji J."/>
            <person name="Chen P."/>
            <person name="Wu S."/>
            <person name="Liu J."/>
            <person name="Xiao Y."/>
            <person name="Bu D."/>
            <person name="Tan J."/>
            <person name="Yang L."/>
            <person name="Ye C."/>
            <person name="Zhang J."/>
            <person name="Xu J."/>
            <person name="Zhou Y."/>
            <person name="Yu Y."/>
            <person name="Zhang B."/>
            <person name="Zhuang S."/>
            <person name="Wei H."/>
            <person name="Liu B."/>
            <person name="Lei M."/>
            <person name="Yu H."/>
            <person name="Li Y."/>
            <person name="Xu H."/>
            <person name="Wei S."/>
            <person name="He X."/>
            <person name="Fang L."/>
            <person name="Zhang Z."/>
            <person name="Zhang Y."/>
            <person name="Huang X."/>
            <person name="Su Z."/>
            <person name="Tong W."/>
            <person name="Li J."/>
            <person name="Tong Z."/>
            <person name="Li S."/>
            <person name="Ye J."/>
            <person name="Wang L."/>
            <person name="Fang L."/>
            <person name="Lei T."/>
            <person name="Chen C.-S."/>
            <person name="Chen H.-C."/>
            <person name="Xu Z."/>
            <person name="Li H."/>
            <person name="Huang H."/>
            <person name="Zhang F."/>
            <person name="Xu H."/>
            <person name="Li N."/>
            <person name="Zhao C."/>
            <person name="Li S."/>
            <person name="Dong L."/>
            <person name="Huang Y."/>
            <person name="Li L."/>
            <person name="Xi Y."/>
            <person name="Qi Q."/>
            <person name="Li W."/>
            <person name="Zhang B."/>
            <person name="Hu W."/>
            <person name="Zhang Y."/>
            <person name="Tian X."/>
            <person name="Jiao Y."/>
            <person name="Liang X."/>
            <person name="Jin J."/>
            <person name="Gao L."/>
            <person name="Zheng W."/>
            <person name="Hao B."/>
            <person name="Liu S.-M."/>
            <person name="Wang W."/>
            <person name="Yuan L."/>
            <person name="Cao M."/>
            <person name="McDermott J."/>
            <person name="Samudrala R."/>
            <person name="Wang J."/>
            <person name="Wong G.K.-S."/>
            <person name="Yang H."/>
        </authorList>
    </citation>
    <scope>NUCLEOTIDE SEQUENCE [LARGE SCALE GENOMIC DNA]</scope>
    <source>
        <strain>cv. Nipponbare</strain>
    </source>
</reference>
<organism>
    <name type="scientific">Oryza sativa subsp. japonica</name>
    <name type="common">Rice</name>
    <dbReference type="NCBI Taxonomy" id="39947"/>
    <lineage>
        <taxon>Eukaryota</taxon>
        <taxon>Viridiplantae</taxon>
        <taxon>Streptophyta</taxon>
        <taxon>Embryophyta</taxon>
        <taxon>Tracheophyta</taxon>
        <taxon>Spermatophyta</taxon>
        <taxon>Magnoliopsida</taxon>
        <taxon>Liliopsida</taxon>
        <taxon>Poales</taxon>
        <taxon>Poaceae</taxon>
        <taxon>BOP clade</taxon>
        <taxon>Oryzoideae</taxon>
        <taxon>Oryzeae</taxon>
        <taxon>Oryzinae</taxon>
        <taxon>Oryza</taxon>
        <taxon>Oryza sativa</taxon>
    </lineage>
</organism>
<name>Y8251_ORYSJ</name>
<dbReference type="EMBL" id="AP004637">
    <property type="protein sequence ID" value="BAD03253.1"/>
    <property type="molecule type" value="Genomic_DNA"/>
</dbReference>
<dbReference type="EMBL" id="AP005493">
    <property type="protein sequence ID" value="BAD03676.1"/>
    <property type="molecule type" value="Genomic_DNA"/>
</dbReference>
<dbReference type="EMBL" id="AP014964">
    <property type="protein sequence ID" value="BAT04896.1"/>
    <property type="molecule type" value="Genomic_DNA"/>
</dbReference>
<dbReference type="EMBL" id="CM000145">
    <property type="protein sequence ID" value="EAZ42313.1"/>
    <property type="molecule type" value="Genomic_DNA"/>
</dbReference>
<dbReference type="SMR" id="Q6Z0D2"/>
<dbReference type="STRING" id="39947.Q6Z0D2"/>
<dbReference type="PaxDb" id="39947-Q6Z0D2"/>
<dbReference type="EnsemblPlants" id="Os08t0325134-00">
    <property type="protein sequence ID" value="Os08t0325134-00"/>
    <property type="gene ID" value="Os08g0325134"/>
</dbReference>
<dbReference type="Gramene" id="Os08t0325134-00">
    <property type="protein sequence ID" value="Os08t0325134-00"/>
    <property type="gene ID" value="Os08g0325134"/>
</dbReference>
<dbReference type="eggNOG" id="ENOG502RRP7">
    <property type="taxonomic scope" value="Eukaryota"/>
</dbReference>
<dbReference type="HOGENOM" id="CLU_015069_0_2_1"/>
<dbReference type="InParanoid" id="Q6Z0D2"/>
<dbReference type="OMA" id="WFRENSC"/>
<dbReference type="Proteomes" id="UP000000763">
    <property type="component" value="Chromosome 8"/>
</dbReference>
<dbReference type="Proteomes" id="UP000007752">
    <property type="component" value="Chromosome 8"/>
</dbReference>
<dbReference type="Proteomes" id="UP000059680">
    <property type="component" value="Chromosome 8"/>
</dbReference>
<dbReference type="GO" id="GO:0005634">
    <property type="term" value="C:nucleus"/>
    <property type="evidence" value="ECO:0007669"/>
    <property type="project" value="UniProtKB-SubCell"/>
</dbReference>
<dbReference type="GO" id="GO:0003677">
    <property type="term" value="F:DNA binding"/>
    <property type="evidence" value="ECO:0007669"/>
    <property type="project" value="UniProtKB-KW"/>
</dbReference>
<dbReference type="CDD" id="cd10017">
    <property type="entry name" value="B3_DNA"/>
    <property type="match status" value="1"/>
</dbReference>
<dbReference type="Gene3D" id="2.40.330.10">
    <property type="entry name" value="DNA-binding pseudobarrel domain"/>
    <property type="match status" value="1"/>
</dbReference>
<dbReference type="InterPro" id="IPR003340">
    <property type="entry name" value="B3_DNA-bd"/>
</dbReference>
<dbReference type="InterPro" id="IPR015300">
    <property type="entry name" value="DNA-bd_pseudobarrel_sf"/>
</dbReference>
<dbReference type="InterPro" id="IPR044837">
    <property type="entry name" value="REM16-like"/>
</dbReference>
<dbReference type="PANTHER" id="PTHR31391:SF121">
    <property type="entry name" value="B3 DOMAIN-CONTAINING PROTEIN OS08G0325100-RELATED"/>
    <property type="match status" value="1"/>
</dbReference>
<dbReference type="PANTHER" id="PTHR31391">
    <property type="entry name" value="B3 DOMAIN-CONTAINING PROTEIN OS11G0197600-RELATED"/>
    <property type="match status" value="1"/>
</dbReference>
<dbReference type="Pfam" id="PF02362">
    <property type="entry name" value="B3"/>
    <property type="match status" value="1"/>
</dbReference>
<dbReference type="SMART" id="SM01019">
    <property type="entry name" value="B3"/>
    <property type="match status" value="1"/>
</dbReference>
<dbReference type="SUPFAM" id="SSF101936">
    <property type="entry name" value="DNA-binding pseudobarrel domain"/>
    <property type="match status" value="1"/>
</dbReference>
<dbReference type="PROSITE" id="PS50863">
    <property type="entry name" value="B3"/>
    <property type="match status" value="1"/>
</dbReference>
<keyword id="KW-0238">DNA-binding</keyword>
<keyword id="KW-0539">Nucleus</keyword>
<keyword id="KW-1185">Reference proteome</keyword>
<keyword id="KW-0804">Transcription</keyword>
<keyword id="KW-0805">Transcription regulation</keyword>
<sequence>MGTWCERCRRRDEQDYRNLDDCQKHFLLLMMGDFQHEIRGEQIVEQLTIPKEFVQRLKGDIPEEIQLETHNRNSYTVRVDKSQEKVIFAAGWAQFVKTFDLHMGDSMMFRFKGNSQFDVIIFDQVGREKVCSVAVDDYLDPNVQEGRTDATETLNSSRAHSQDDYLDPNVQEGRTNATETLNSSRAHSQPMPMQTPATETLNSSRAHSQDMPMQSPATETLNSSRAHPQPMPMQLPTETVNHFHAPHYPMQMPIENMALSRTQAMPTQMQSPPTYRWTQVQRDNLRYSLPSEDQGCRVGVIPDPIIGRRTKLNPVQEKVVNFKIQHIHSEIPIFVAVIKRSNVSGVLSTLSVAKRYVDEYLGGERFISLSRLGGKWGIRLLLVGVGVAQGW</sequence>
<accession>Q6Z0D2</accession>
<accession>A0A0P0XEN4</accession>
<evidence type="ECO:0000255" key="1">
    <source>
        <dbReference type="PROSITE-ProRule" id="PRU00326"/>
    </source>
</evidence>
<evidence type="ECO:0000256" key="2">
    <source>
        <dbReference type="SAM" id="MobiDB-lite"/>
    </source>
</evidence>
<proteinExistence type="inferred from homology"/>
<comment type="subcellular location">
    <subcellularLocation>
        <location evidence="1">Nucleus</location>
    </subcellularLocation>
</comment>
<feature type="chain" id="PRO_0000376980" description="Putative B3 domain-containing protein Os08g0325100">
    <location>
        <begin position="1"/>
        <end position="391"/>
    </location>
</feature>
<feature type="DNA-binding region" description="TF-B3" evidence="1">
    <location>
        <begin position="32"/>
        <end position="125"/>
    </location>
</feature>
<feature type="region of interest" description="Disordered" evidence="2">
    <location>
        <begin position="143"/>
        <end position="232"/>
    </location>
</feature>
<feature type="compositionally biased region" description="Polar residues" evidence="2">
    <location>
        <begin position="172"/>
        <end position="226"/>
    </location>
</feature>
<protein>
    <recommendedName>
        <fullName>Putative B3 domain-containing protein Os08g0325100</fullName>
    </recommendedName>
</protein>